<reference key="1">
    <citation type="journal article" date="2000" name="Genome">
        <title>Gene content and organization of a 281-kbp contig from the genome of the extremely thermophilic archaeon, Sulfolobus solfataricus P2.</title>
        <authorList>
            <person name="Charlebois R.L."/>
            <person name="Singh R.K."/>
            <person name="Chan-Weiher C.C.-Y."/>
            <person name="Allard G."/>
            <person name="Chow C."/>
            <person name="Confalonieri F."/>
            <person name="Curtis B."/>
            <person name="Duguet M."/>
            <person name="Erauso G."/>
            <person name="Faguy D."/>
            <person name="Gaasterland T."/>
            <person name="Garrett R.A."/>
            <person name="Gordon P."/>
            <person name="Jeffries A.C."/>
            <person name="Kozera C."/>
            <person name="Kushwaha N."/>
            <person name="Lafleur E."/>
            <person name="Medina N."/>
            <person name="Peng X."/>
            <person name="Penny S.L."/>
            <person name="She Q."/>
            <person name="St Jean A."/>
            <person name="van der Oost J."/>
            <person name="Young F."/>
            <person name="Zivanovic Y."/>
            <person name="Doolittle W.F."/>
            <person name="Ragan M.A."/>
            <person name="Sensen C.W."/>
        </authorList>
    </citation>
    <scope>NUCLEOTIDE SEQUENCE [LARGE SCALE GENOMIC DNA]</scope>
    <source>
        <strain>ATCC 35092 / DSM 1617 / JCM 11322 / P2</strain>
    </source>
</reference>
<reference key="2">
    <citation type="journal article" date="2001" name="Proc. Natl. Acad. Sci. U.S.A.">
        <title>The complete genome of the crenarchaeon Sulfolobus solfataricus P2.</title>
        <authorList>
            <person name="She Q."/>
            <person name="Singh R.K."/>
            <person name="Confalonieri F."/>
            <person name="Zivanovic Y."/>
            <person name="Allard G."/>
            <person name="Awayez M.J."/>
            <person name="Chan-Weiher C.C.-Y."/>
            <person name="Clausen I.G."/>
            <person name="Curtis B.A."/>
            <person name="De Moors A."/>
            <person name="Erauso G."/>
            <person name="Fletcher C."/>
            <person name="Gordon P.M.K."/>
            <person name="Heikamp-de Jong I."/>
            <person name="Jeffries A.C."/>
            <person name="Kozera C.J."/>
            <person name="Medina N."/>
            <person name="Peng X."/>
            <person name="Thi-Ngoc H.P."/>
            <person name="Redder P."/>
            <person name="Schenk M.E."/>
            <person name="Theriault C."/>
            <person name="Tolstrup N."/>
            <person name="Charlebois R.L."/>
            <person name="Doolittle W.F."/>
            <person name="Duguet M."/>
            <person name="Gaasterland T."/>
            <person name="Garrett R.A."/>
            <person name="Ragan M.A."/>
            <person name="Sensen C.W."/>
            <person name="Van der Oost J."/>
        </authorList>
    </citation>
    <scope>NUCLEOTIDE SEQUENCE [LARGE SCALE GENOMIC DNA]</scope>
    <source>
        <strain>ATCC 35092 / DSM 1617 / JCM 11322 / P2</strain>
    </source>
</reference>
<feature type="chain" id="PRO_0000119235" description="A-type ATP synthase subunit I">
    <location>
        <begin position="1"/>
        <end position="701"/>
    </location>
</feature>
<feature type="transmembrane region" description="Helical" evidence="2">
    <location>
        <begin position="340"/>
        <end position="360"/>
    </location>
</feature>
<feature type="transmembrane region" description="Helical" evidence="2">
    <location>
        <begin position="363"/>
        <end position="379"/>
    </location>
</feature>
<feature type="transmembrane region" description="Helical" evidence="2">
    <location>
        <begin position="388"/>
        <end position="408"/>
    </location>
</feature>
<feature type="transmembrane region" description="Helical" evidence="2">
    <location>
        <begin position="435"/>
        <end position="455"/>
    </location>
</feature>
<feature type="transmembrane region" description="Helical" evidence="2">
    <location>
        <begin position="468"/>
        <end position="488"/>
    </location>
</feature>
<feature type="transmembrane region" description="Helical" evidence="2">
    <location>
        <begin position="498"/>
        <end position="518"/>
    </location>
</feature>
<feature type="transmembrane region" description="Helical" evidence="2">
    <location>
        <begin position="555"/>
        <end position="575"/>
    </location>
</feature>
<feature type="transmembrane region" description="Helical" evidence="2">
    <location>
        <begin position="583"/>
        <end position="603"/>
    </location>
</feature>
<feature type="transmembrane region" description="Helical" evidence="2">
    <location>
        <begin position="612"/>
        <end position="632"/>
    </location>
</feature>
<feature type="transmembrane region" description="Helical" evidence="2">
    <location>
        <begin position="649"/>
        <end position="669"/>
    </location>
</feature>
<comment type="function">
    <text evidence="1">Component of the A-type ATP synthase that produces ATP from ADP in the presence of a proton gradient across the membrane.</text>
</comment>
<comment type="subunit">
    <text evidence="1">Has multiple subunits with at least A(3), B(3), C, D, E, F, H, I and proteolipid K(x).</text>
</comment>
<comment type="subcellular location">
    <subcellularLocation>
        <location evidence="4">Cell membrane</location>
        <topology evidence="4">Multi-pass membrane protein</topology>
    </subcellularLocation>
</comment>
<comment type="similarity">
    <text evidence="4">Belongs to the V-ATPase 116 kDa subunit family.</text>
</comment>
<accession>Q9UWW3</accession>
<gene>
    <name evidence="3" type="primary">atpI</name>
    <name type="ordered locus">SSO0559</name>
    <name type="ORF">C21_040</name>
</gene>
<protein>
    <recommendedName>
        <fullName evidence="4">A-type ATP synthase subunit I</fullName>
    </recommendedName>
</protein>
<keyword id="KW-1003">Cell membrane</keyword>
<keyword id="KW-0375">Hydrogen ion transport</keyword>
<keyword id="KW-0406">Ion transport</keyword>
<keyword id="KW-0472">Membrane</keyword>
<keyword id="KW-1185">Reference proteome</keyword>
<keyword id="KW-0812">Transmembrane</keyword>
<keyword id="KW-1133">Transmembrane helix</keyword>
<keyword id="KW-0813">Transport</keyword>
<name>AATI_SACS2</name>
<evidence type="ECO:0000250" key="1">
    <source>
        <dbReference type="UniProtKB" id="Q57675"/>
    </source>
</evidence>
<evidence type="ECO:0000255" key="2"/>
<evidence type="ECO:0000303" key="3">
    <source>
    </source>
</evidence>
<evidence type="ECO:0000305" key="4"/>
<proteinExistence type="inferred from homology"/>
<organism>
    <name type="scientific">Saccharolobus solfataricus (strain ATCC 35092 / DSM 1617 / JCM 11322 / P2)</name>
    <name type="common">Sulfolobus solfataricus</name>
    <dbReference type="NCBI Taxonomy" id="273057"/>
    <lineage>
        <taxon>Archaea</taxon>
        <taxon>Thermoproteota</taxon>
        <taxon>Thermoprotei</taxon>
        <taxon>Sulfolobales</taxon>
        <taxon>Sulfolobaceae</taxon>
        <taxon>Saccharolobus</taxon>
    </lineage>
</organism>
<sequence>MLLPENMVRLQIISDKSAIDPIITKLLKLGMFQPEDPLYPLGNERIEDARRLITAVQDHVSKLKIIMELGGLVIEPLGSIKVSSWIKAAQDVSEEASKLEERYKELLEEIGRLRSEKDLYQQQLKELEPIKSITVELSKLYSLELFDVILAQVDEDKLRLINQIIGDSNFVYYTRFGEERYIVLIIAEKNINVDKKLREAGVRRYELQEGKSPFQLYNEILERINQINIILERTREELAKKVKTEENYIKNVYGKLLTVRDALNIMNKARVSEYYLQIEGYFPEKHVKKVQNEINNLAFMDYIRPRRYGEKEEPPTLVELPKSIKVLESLVEIYGSPSYWEISPIVFLVFTFPILFGLMFPDFGNALVLLLFSIWFYRYGKKRGSENIPKLSIILIYSSIVAIITGLLARDFFGPLPVGGLREILNNGNYSAGPLYNLWPIPASVSEAIKFLLPFGEYSTSVSIENTMIFSVLLGALALFVSSLLGVIDAIRKKDPEFLFLEKLPLFLLYVVPIFIFMYGITDPANFFTVDQQILGQILNAVLMKSFSENIVGYGIVWWTSFALLYNWAAHAILVKRHDNATWGSAIAMGFIEGGFEGALLLLSNTISFIRVLVFALSHYYILYAFSYMAYLVAPSTTTIGVLINPIAIIILIIGNLLAIGLEGLVVFIQDLRLHFYEMFSKFYEGRGRKFEPVMAYVSLE</sequence>
<dbReference type="EMBL" id="Y18930">
    <property type="protein sequence ID" value="CAB57740.1"/>
    <property type="molecule type" value="Genomic_DNA"/>
</dbReference>
<dbReference type="EMBL" id="AE006641">
    <property type="protein sequence ID" value="AAK40876.1"/>
    <property type="molecule type" value="Genomic_DNA"/>
</dbReference>
<dbReference type="PIR" id="E90202">
    <property type="entry name" value="E90202"/>
</dbReference>
<dbReference type="SMR" id="Q9UWW3"/>
<dbReference type="FunCoup" id="Q9UWW3">
    <property type="interactions" value="99"/>
</dbReference>
<dbReference type="STRING" id="273057.SSO0559"/>
<dbReference type="PaxDb" id="273057-SSO0559"/>
<dbReference type="EnsemblBacteria" id="AAK40876">
    <property type="protein sequence ID" value="AAK40876"/>
    <property type="gene ID" value="SSO0559"/>
</dbReference>
<dbReference type="KEGG" id="sso:SSO0559"/>
<dbReference type="PATRIC" id="fig|273057.12.peg.569"/>
<dbReference type="eggNOG" id="arCOG04138">
    <property type="taxonomic scope" value="Archaea"/>
</dbReference>
<dbReference type="HOGENOM" id="CLU_025558_0_0_2"/>
<dbReference type="InParanoid" id="Q9UWW3"/>
<dbReference type="PhylomeDB" id="Q9UWW3"/>
<dbReference type="Proteomes" id="UP000001974">
    <property type="component" value="Chromosome"/>
</dbReference>
<dbReference type="GO" id="GO:0005886">
    <property type="term" value="C:plasma membrane"/>
    <property type="evidence" value="ECO:0007669"/>
    <property type="project" value="UniProtKB-SubCell"/>
</dbReference>
<dbReference type="GO" id="GO:0033179">
    <property type="term" value="C:proton-transporting V-type ATPase, V0 domain"/>
    <property type="evidence" value="ECO:0007669"/>
    <property type="project" value="InterPro"/>
</dbReference>
<dbReference type="GO" id="GO:0016471">
    <property type="term" value="C:vacuolar proton-transporting V-type ATPase complex"/>
    <property type="evidence" value="ECO:0000318"/>
    <property type="project" value="GO_Central"/>
</dbReference>
<dbReference type="GO" id="GO:0051117">
    <property type="term" value="F:ATPase binding"/>
    <property type="evidence" value="ECO:0000318"/>
    <property type="project" value="GO_Central"/>
</dbReference>
<dbReference type="GO" id="GO:0046961">
    <property type="term" value="F:proton-transporting ATPase activity, rotational mechanism"/>
    <property type="evidence" value="ECO:0007669"/>
    <property type="project" value="InterPro"/>
</dbReference>
<dbReference type="GO" id="GO:0007035">
    <property type="term" value="P:vacuolar acidification"/>
    <property type="evidence" value="ECO:0000318"/>
    <property type="project" value="GO_Central"/>
</dbReference>
<dbReference type="Gene3D" id="1.20.1460.20">
    <property type="match status" value="1"/>
</dbReference>
<dbReference type="Gene3D" id="3.30.70.2170">
    <property type="match status" value="1"/>
</dbReference>
<dbReference type="Gene3D" id="3.30.70.2750">
    <property type="match status" value="1"/>
</dbReference>
<dbReference type="InterPro" id="IPR002490">
    <property type="entry name" value="V-ATPase_116kDa_su"/>
</dbReference>
<dbReference type="NCBIfam" id="NF004435">
    <property type="entry name" value="PRK05771.3-4"/>
    <property type="match status" value="1"/>
</dbReference>
<dbReference type="PANTHER" id="PTHR11629:SF63">
    <property type="entry name" value="V-TYPE PROTON ATPASE SUBUNIT A"/>
    <property type="match status" value="1"/>
</dbReference>
<dbReference type="PANTHER" id="PTHR11629">
    <property type="entry name" value="VACUOLAR PROTON ATPASES"/>
    <property type="match status" value="1"/>
</dbReference>
<dbReference type="Pfam" id="PF01496">
    <property type="entry name" value="V_ATPase_I"/>
    <property type="match status" value="2"/>
</dbReference>